<protein>
    <recommendedName>
        <fullName>Cytosolic Fe-S cluster assembly factor NAR1 homolog</fullName>
    </recommendedName>
    <alternativeName>
        <fullName>Nuclear architecture-related protein 1 homolog</fullName>
    </alternativeName>
</protein>
<sequence>MAKLSVNDLNDFLSPGAVCIKPAQVKKQESKNDIRIDGDAYYEVTKDTGETSELGIASISLNDCLACSGCITSAETVLVNLQSYQEVLKHLESRKSQEILYVSLSPQVRANLAAYYGLSLQEIQAVLEMVFIGKLGFHAILDTNASREIVLQQCAQEFCNSWLQSRAHKNQNQVTNSVVNEHPLIPHSTSQISGVHSNTSSNSGINENAVLPILSSSCPGWICYVEKTHSNLIPNLSRVRSPQQACGRILKDWAVQQFSMQRNDVWHLSLMPCFDKKLEASRDEFSENGVRDVDSVLTPKELVEMFKFLRIDPIELTKNPIPFQQSTDAIPFWYPRITYEEQIGSSSGGYMGYVLSYAAKMLFGIDDVGPYVSMNNKNGDLTEYTLRHPETNEQLISMATCYGFRNIQNLVRRVHGNSSVRKGRVLLKKRVRSNAQNPTEEPSRYDYVEVMACPGGCINGGGQLPFPSVERIVSARDWMQQVEKLYYEPGTRSVDQSAVSYMLEQWVKDPTLTPKFLHTSYRAVQTDNDNPLLLANKW</sequence>
<comment type="function">
    <text evidence="1">Component of the cytosolic Fe/S protein assembly machinery. Required for maturation of extramitochondrial Fe/S proteins. May play a role in the transfer of pre-assembled Fe/S clusters to target apoproteins (By similarity).</text>
</comment>
<comment type="subcellular location">
    <subcellularLocation>
        <location evidence="3">Cytoplasm</location>
    </subcellularLocation>
    <subcellularLocation>
        <location evidence="3">Nucleus</location>
    </subcellularLocation>
</comment>
<comment type="similarity">
    <text evidence="4">Belongs to the NARF family.</text>
</comment>
<evidence type="ECO:0000250" key="1"/>
<evidence type="ECO:0000255" key="2"/>
<evidence type="ECO:0000269" key="3">
    <source>
    </source>
</evidence>
<evidence type="ECO:0000305" key="4"/>
<feature type="chain" id="PRO_0000316027" description="Cytosolic Fe-S cluster assembly factor NAR1 homolog">
    <location>
        <begin position="1"/>
        <end position="538"/>
    </location>
</feature>
<feature type="binding site" evidence="2">
    <location>
        <position position="19"/>
    </location>
    <ligand>
        <name>[4Fe-4S] cluster</name>
        <dbReference type="ChEBI" id="CHEBI:49883"/>
        <label>1</label>
    </ligand>
</feature>
<feature type="binding site" evidence="2">
    <location>
        <position position="64"/>
    </location>
    <ligand>
        <name>[4Fe-4S] cluster</name>
        <dbReference type="ChEBI" id="CHEBI:49883"/>
        <label>1</label>
    </ligand>
</feature>
<feature type="binding site" evidence="2">
    <location>
        <position position="67"/>
    </location>
    <ligand>
        <name>[4Fe-4S] cluster</name>
        <dbReference type="ChEBI" id="CHEBI:49883"/>
        <label>1</label>
    </ligand>
</feature>
<feature type="binding site" evidence="2">
    <location>
        <position position="70"/>
    </location>
    <ligand>
        <name>[4Fe-4S] cluster</name>
        <dbReference type="ChEBI" id="CHEBI:49883"/>
        <label>1</label>
    </ligand>
</feature>
<feature type="binding site" evidence="2">
    <location>
        <position position="218"/>
    </location>
    <ligand>
        <name>[4Fe-4S] cluster</name>
        <dbReference type="ChEBI" id="CHEBI:49883"/>
        <label>2</label>
    </ligand>
</feature>
<feature type="binding site" evidence="2">
    <location>
        <position position="273"/>
    </location>
    <ligand>
        <name>[4Fe-4S] cluster</name>
        <dbReference type="ChEBI" id="CHEBI:49883"/>
        <label>2</label>
    </ligand>
</feature>
<feature type="binding site" evidence="2">
    <location>
        <position position="453"/>
    </location>
    <ligand>
        <name>[4Fe-4S] cluster</name>
        <dbReference type="ChEBI" id="CHEBI:49883"/>
        <label>2</label>
    </ligand>
</feature>
<feature type="binding site" evidence="2">
    <location>
        <position position="457"/>
    </location>
    <ligand>
        <name>[4Fe-4S] cluster</name>
        <dbReference type="ChEBI" id="CHEBI:49883"/>
        <label>2</label>
    </ligand>
</feature>
<dbReference type="EMBL" id="CU329672">
    <property type="protein sequence ID" value="CAB40177.1"/>
    <property type="molecule type" value="Genomic_DNA"/>
</dbReference>
<dbReference type="PIR" id="T40992">
    <property type="entry name" value="T40992"/>
</dbReference>
<dbReference type="SMR" id="Q9Y7N7"/>
<dbReference type="FunCoup" id="Q9Y7N7">
    <property type="interactions" value="83"/>
</dbReference>
<dbReference type="STRING" id="284812.Q9Y7N7"/>
<dbReference type="PaxDb" id="4896-SPCC1450.10c.1"/>
<dbReference type="EnsemblFungi" id="SPCC1450.10c.1">
    <property type="protein sequence ID" value="SPCC1450.10c.1:pep"/>
    <property type="gene ID" value="SPCC1450.10c"/>
</dbReference>
<dbReference type="KEGG" id="spo:2538783"/>
<dbReference type="PomBase" id="SPCC1450.10c"/>
<dbReference type="VEuPathDB" id="FungiDB:SPCC1450.10c"/>
<dbReference type="eggNOG" id="KOG2439">
    <property type="taxonomic scope" value="Eukaryota"/>
</dbReference>
<dbReference type="HOGENOM" id="CLU_018240_0_0_1"/>
<dbReference type="InParanoid" id="Q9Y7N7"/>
<dbReference type="OMA" id="GYLHHVL"/>
<dbReference type="PhylomeDB" id="Q9Y7N7"/>
<dbReference type="PRO" id="PR:Q9Y7N7"/>
<dbReference type="Proteomes" id="UP000002485">
    <property type="component" value="Chromosome III"/>
</dbReference>
<dbReference type="GO" id="GO:0005829">
    <property type="term" value="C:cytosol"/>
    <property type="evidence" value="ECO:0007005"/>
    <property type="project" value="PomBase"/>
</dbReference>
<dbReference type="GO" id="GO:0097361">
    <property type="term" value="C:cytosolic [4Fe-4S] assembly targeting complex"/>
    <property type="evidence" value="ECO:0000318"/>
    <property type="project" value="GO_Central"/>
</dbReference>
<dbReference type="GO" id="GO:0005634">
    <property type="term" value="C:nucleus"/>
    <property type="evidence" value="ECO:0007005"/>
    <property type="project" value="PomBase"/>
</dbReference>
<dbReference type="GO" id="GO:0051539">
    <property type="term" value="F:4 iron, 4 sulfur cluster binding"/>
    <property type="evidence" value="ECO:0007669"/>
    <property type="project" value="UniProtKB-KW"/>
</dbReference>
<dbReference type="GO" id="GO:0008901">
    <property type="term" value="F:ferredoxin hydrogenase activity"/>
    <property type="evidence" value="ECO:0000255"/>
    <property type="project" value="PomBase"/>
</dbReference>
<dbReference type="GO" id="GO:0051536">
    <property type="term" value="F:iron-sulfur cluster binding"/>
    <property type="evidence" value="ECO:0000250"/>
    <property type="project" value="UniProtKB"/>
</dbReference>
<dbReference type="GO" id="GO:0046872">
    <property type="term" value="F:metal ion binding"/>
    <property type="evidence" value="ECO:0007669"/>
    <property type="project" value="UniProtKB-KW"/>
</dbReference>
<dbReference type="GO" id="GO:0016226">
    <property type="term" value="P:iron-sulfur cluster assembly"/>
    <property type="evidence" value="ECO:0000250"/>
    <property type="project" value="UniProtKB"/>
</dbReference>
<dbReference type="Gene3D" id="3.30.70.20">
    <property type="match status" value="1"/>
</dbReference>
<dbReference type="Gene3D" id="3.40.50.1780">
    <property type="match status" value="1"/>
</dbReference>
<dbReference type="Gene3D" id="3.40.950.10">
    <property type="entry name" value="Fe-only Hydrogenase (Larger Subunit), Chain L, domain 3"/>
    <property type="match status" value="1"/>
</dbReference>
<dbReference type="InterPro" id="IPR050340">
    <property type="entry name" value="Cytosolic_Fe-S_CAF"/>
</dbReference>
<dbReference type="InterPro" id="IPR009016">
    <property type="entry name" value="Fe_hydrogenase"/>
</dbReference>
<dbReference type="InterPro" id="IPR004108">
    <property type="entry name" value="Fe_hydrogenase_lsu_C"/>
</dbReference>
<dbReference type="PANTHER" id="PTHR11615">
    <property type="entry name" value="NITRATE, FORMATE, IRON DEHYDROGENASE"/>
    <property type="match status" value="1"/>
</dbReference>
<dbReference type="Pfam" id="PF02906">
    <property type="entry name" value="Fe_hyd_lg_C"/>
    <property type="match status" value="1"/>
</dbReference>
<dbReference type="SUPFAM" id="SSF53920">
    <property type="entry name" value="Fe-only hydrogenase"/>
    <property type="match status" value="1"/>
</dbReference>
<keyword id="KW-0004">4Fe-4S</keyword>
<keyword id="KW-0963">Cytoplasm</keyword>
<keyword id="KW-0408">Iron</keyword>
<keyword id="KW-0411">Iron-sulfur</keyword>
<keyword id="KW-0479">Metal-binding</keyword>
<keyword id="KW-0539">Nucleus</keyword>
<keyword id="KW-1185">Reference proteome</keyword>
<proteinExistence type="inferred from homology"/>
<gene>
    <name type="ORF">SPCC1450.10c</name>
</gene>
<reference key="1">
    <citation type="journal article" date="2002" name="Nature">
        <title>The genome sequence of Schizosaccharomyces pombe.</title>
        <authorList>
            <person name="Wood V."/>
            <person name="Gwilliam R."/>
            <person name="Rajandream M.A."/>
            <person name="Lyne M.H."/>
            <person name="Lyne R."/>
            <person name="Stewart A."/>
            <person name="Sgouros J.G."/>
            <person name="Peat N."/>
            <person name="Hayles J."/>
            <person name="Baker S.G."/>
            <person name="Basham D."/>
            <person name="Bowman S."/>
            <person name="Brooks K."/>
            <person name="Brown D."/>
            <person name="Brown S."/>
            <person name="Chillingworth T."/>
            <person name="Churcher C.M."/>
            <person name="Collins M."/>
            <person name="Connor R."/>
            <person name="Cronin A."/>
            <person name="Davis P."/>
            <person name="Feltwell T."/>
            <person name="Fraser A."/>
            <person name="Gentles S."/>
            <person name="Goble A."/>
            <person name="Hamlin N."/>
            <person name="Harris D.E."/>
            <person name="Hidalgo J."/>
            <person name="Hodgson G."/>
            <person name="Holroyd S."/>
            <person name="Hornsby T."/>
            <person name="Howarth S."/>
            <person name="Huckle E.J."/>
            <person name="Hunt S."/>
            <person name="Jagels K."/>
            <person name="James K.D."/>
            <person name="Jones L."/>
            <person name="Jones M."/>
            <person name="Leather S."/>
            <person name="McDonald S."/>
            <person name="McLean J."/>
            <person name="Mooney P."/>
            <person name="Moule S."/>
            <person name="Mungall K.L."/>
            <person name="Murphy L.D."/>
            <person name="Niblett D."/>
            <person name="Odell C."/>
            <person name="Oliver K."/>
            <person name="O'Neil S."/>
            <person name="Pearson D."/>
            <person name="Quail M.A."/>
            <person name="Rabbinowitsch E."/>
            <person name="Rutherford K.M."/>
            <person name="Rutter S."/>
            <person name="Saunders D."/>
            <person name="Seeger K."/>
            <person name="Sharp S."/>
            <person name="Skelton J."/>
            <person name="Simmonds M.N."/>
            <person name="Squares R."/>
            <person name="Squares S."/>
            <person name="Stevens K."/>
            <person name="Taylor K."/>
            <person name="Taylor R.G."/>
            <person name="Tivey A."/>
            <person name="Walsh S.V."/>
            <person name="Warren T."/>
            <person name="Whitehead S."/>
            <person name="Woodward J.R."/>
            <person name="Volckaert G."/>
            <person name="Aert R."/>
            <person name="Robben J."/>
            <person name="Grymonprez B."/>
            <person name="Weltjens I."/>
            <person name="Vanstreels E."/>
            <person name="Rieger M."/>
            <person name="Schaefer M."/>
            <person name="Mueller-Auer S."/>
            <person name="Gabel C."/>
            <person name="Fuchs M."/>
            <person name="Duesterhoeft A."/>
            <person name="Fritzc C."/>
            <person name="Holzer E."/>
            <person name="Moestl D."/>
            <person name="Hilbert H."/>
            <person name="Borzym K."/>
            <person name="Langer I."/>
            <person name="Beck A."/>
            <person name="Lehrach H."/>
            <person name="Reinhardt R."/>
            <person name="Pohl T.M."/>
            <person name="Eger P."/>
            <person name="Zimmermann W."/>
            <person name="Wedler H."/>
            <person name="Wambutt R."/>
            <person name="Purnelle B."/>
            <person name="Goffeau A."/>
            <person name="Cadieu E."/>
            <person name="Dreano S."/>
            <person name="Gloux S."/>
            <person name="Lelaure V."/>
            <person name="Mottier S."/>
            <person name="Galibert F."/>
            <person name="Aves S.J."/>
            <person name="Xiang Z."/>
            <person name="Hunt C."/>
            <person name="Moore K."/>
            <person name="Hurst S.M."/>
            <person name="Lucas M."/>
            <person name="Rochet M."/>
            <person name="Gaillardin C."/>
            <person name="Tallada V.A."/>
            <person name="Garzon A."/>
            <person name="Thode G."/>
            <person name="Daga R.R."/>
            <person name="Cruzado L."/>
            <person name="Jimenez J."/>
            <person name="Sanchez M."/>
            <person name="del Rey F."/>
            <person name="Benito J."/>
            <person name="Dominguez A."/>
            <person name="Revuelta J.L."/>
            <person name="Moreno S."/>
            <person name="Armstrong J."/>
            <person name="Forsburg S.L."/>
            <person name="Cerutti L."/>
            <person name="Lowe T."/>
            <person name="McCombie W.R."/>
            <person name="Paulsen I."/>
            <person name="Potashkin J."/>
            <person name="Shpakovski G.V."/>
            <person name="Ussery D."/>
            <person name="Barrell B.G."/>
            <person name="Nurse P."/>
        </authorList>
    </citation>
    <scope>NUCLEOTIDE SEQUENCE [LARGE SCALE GENOMIC DNA]</scope>
    <source>
        <strain>972 / ATCC 24843</strain>
    </source>
</reference>
<reference key="2">
    <citation type="journal article" date="2006" name="Nat. Biotechnol.">
        <title>ORFeome cloning and global analysis of protein localization in the fission yeast Schizosaccharomyces pombe.</title>
        <authorList>
            <person name="Matsuyama A."/>
            <person name="Arai R."/>
            <person name="Yashiroda Y."/>
            <person name="Shirai A."/>
            <person name="Kamata A."/>
            <person name="Sekido S."/>
            <person name="Kobayashi Y."/>
            <person name="Hashimoto A."/>
            <person name="Hamamoto M."/>
            <person name="Hiraoka Y."/>
            <person name="Horinouchi S."/>
            <person name="Yoshida M."/>
        </authorList>
    </citation>
    <scope>SUBCELLULAR LOCATION [LARGE SCALE ANALYSIS]</scope>
</reference>
<name>NAR1_SCHPO</name>
<organism>
    <name type="scientific">Schizosaccharomyces pombe (strain 972 / ATCC 24843)</name>
    <name type="common">Fission yeast</name>
    <dbReference type="NCBI Taxonomy" id="284812"/>
    <lineage>
        <taxon>Eukaryota</taxon>
        <taxon>Fungi</taxon>
        <taxon>Dikarya</taxon>
        <taxon>Ascomycota</taxon>
        <taxon>Taphrinomycotina</taxon>
        <taxon>Schizosaccharomycetes</taxon>
        <taxon>Schizosaccharomycetales</taxon>
        <taxon>Schizosaccharomycetaceae</taxon>
        <taxon>Schizosaccharomyces</taxon>
    </lineage>
</organism>
<accession>Q9Y7N7</accession>